<sequence>MTDYPIKYRLIKTEKHTGARLGEIITPHGTFPTPMFMPVGTQATVKTQSPEELKAIGSGIILSNTYHLWLRPGDELIARSGGLHKFMNWDQPILTDSGGFQVYSLADSRNITEEGVTFKNHLNGSKMFLSPEKAISIQNNLGSDIMMSFDECPQFYQPYDYVKKSIERTSRWAERGLKAHRRPHDQGLFGIVQGAGFEDLRRQSAADLVAMDFPGYSIGGLAVGESHEEMNAVLDFTTPLLPENKPRYLMGVGAPDSLIDGVIRGVDMFDCVLPTRIARNGTCMTSEGRLVIKNAKFAEDFTPLDHDCDCYTCQNYSRAYIRHLLKADETFGIRLTSYHNLYFLVNLMKKVRQAIMDDNLLEFRQDFLERYGYNKSNRNF</sequence>
<feature type="chain" id="PRO_1000016868" description="Queuine tRNA-ribosyltransferase">
    <location>
        <begin position="1"/>
        <end position="380"/>
    </location>
</feature>
<feature type="region of interest" description="RNA binding" evidence="1">
    <location>
        <begin position="251"/>
        <end position="257"/>
    </location>
</feature>
<feature type="region of interest" description="RNA binding; important for wobble base 34 recognition" evidence="1">
    <location>
        <begin position="275"/>
        <end position="279"/>
    </location>
</feature>
<feature type="active site" description="Proton acceptor" evidence="1">
    <location>
        <position position="96"/>
    </location>
</feature>
<feature type="active site" description="Nucleophile" evidence="1">
    <location>
        <position position="270"/>
    </location>
</feature>
<feature type="binding site" evidence="1">
    <location>
        <begin position="96"/>
        <end position="100"/>
    </location>
    <ligand>
        <name>substrate</name>
    </ligand>
</feature>
<feature type="binding site" evidence="1">
    <location>
        <position position="150"/>
    </location>
    <ligand>
        <name>substrate</name>
    </ligand>
</feature>
<feature type="binding site" evidence="1">
    <location>
        <position position="193"/>
    </location>
    <ligand>
        <name>substrate</name>
    </ligand>
</feature>
<feature type="binding site" evidence="1">
    <location>
        <position position="220"/>
    </location>
    <ligand>
        <name>substrate</name>
    </ligand>
</feature>
<feature type="binding site" evidence="1">
    <location>
        <position position="308"/>
    </location>
    <ligand>
        <name>Zn(2+)</name>
        <dbReference type="ChEBI" id="CHEBI:29105"/>
    </ligand>
</feature>
<feature type="binding site" evidence="1">
    <location>
        <position position="310"/>
    </location>
    <ligand>
        <name>Zn(2+)</name>
        <dbReference type="ChEBI" id="CHEBI:29105"/>
    </ligand>
</feature>
<feature type="binding site" evidence="1">
    <location>
        <position position="313"/>
    </location>
    <ligand>
        <name>Zn(2+)</name>
        <dbReference type="ChEBI" id="CHEBI:29105"/>
    </ligand>
</feature>
<feature type="binding site" evidence="1">
    <location>
        <position position="339"/>
    </location>
    <ligand>
        <name>Zn(2+)</name>
        <dbReference type="ChEBI" id="CHEBI:29105"/>
    </ligand>
</feature>
<organism>
    <name type="scientific">Streptococcus pyogenes serotype M12 (strain MGAS2096)</name>
    <dbReference type="NCBI Taxonomy" id="370553"/>
    <lineage>
        <taxon>Bacteria</taxon>
        <taxon>Bacillati</taxon>
        <taxon>Bacillota</taxon>
        <taxon>Bacilli</taxon>
        <taxon>Lactobacillales</taxon>
        <taxon>Streptococcaceae</taxon>
        <taxon>Streptococcus</taxon>
    </lineage>
</organism>
<keyword id="KW-0328">Glycosyltransferase</keyword>
<keyword id="KW-0479">Metal-binding</keyword>
<keyword id="KW-0671">Queuosine biosynthesis</keyword>
<keyword id="KW-0808">Transferase</keyword>
<keyword id="KW-0819">tRNA processing</keyword>
<keyword id="KW-0862">Zinc</keyword>
<accession>Q1JDS0</accession>
<proteinExistence type="inferred from homology"/>
<reference key="1">
    <citation type="journal article" date="2006" name="Proc. Natl. Acad. Sci. U.S.A.">
        <title>Molecular genetic anatomy of inter- and intraserotype variation in the human bacterial pathogen group A Streptococcus.</title>
        <authorList>
            <person name="Beres S.B."/>
            <person name="Richter E.W."/>
            <person name="Nagiec M.J."/>
            <person name="Sumby P."/>
            <person name="Porcella S.F."/>
            <person name="DeLeo F.R."/>
            <person name="Musser J.M."/>
        </authorList>
    </citation>
    <scope>NUCLEOTIDE SEQUENCE [LARGE SCALE GENOMIC DNA]</scope>
    <source>
        <strain>MGAS2096</strain>
    </source>
</reference>
<evidence type="ECO:0000255" key="1">
    <source>
        <dbReference type="HAMAP-Rule" id="MF_00168"/>
    </source>
</evidence>
<dbReference type="EC" id="2.4.2.29" evidence="1"/>
<dbReference type="EMBL" id="CP000261">
    <property type="protein sequence ID" value="ABF35238.1"/>
    <property type="molecule type" value="Genomic_DNA"/>
</dbReference>
<dbReference type="SMR" id="Q1JDS0"/>
<dbReference type="KEGG" id="spj:MGAS2096_Spy0186"/>
<dbReference type="HOGENOM" id="CLU_022060_0_1_9"/>
<dbReference type="UniPathway" id="UPA00392"/>
<dbReference type="GO" id="GO:0005829">
    <property type="term" value="C:cytosol"/>
    <property type="evidence" value="ECO:0007669"/>
    <property type="project" value="TreeGrafter"/>
</dbReference>
<dbReference type="GO" id="GO:0046872">
    <property type="term" value="F:metal ion binding"/>
    <property type="evidence" value="ECO:0007669"/>
    <property type="project" value="UniProtKB-KW"/>
</dbReference>
<dbReference type="GO" id="GO:0008479">
    <property type="term" value="F:tRNA-guanosine(34) queuine transglycosylase activity"/>
    <property type="evidence" value="ECO:0007669"/>
    <property type="project" value="UniProtKB-UniRule"/>
</dbReference>
<dbReference type="GO" id="GO:0008616">
    <property type="term" value="P:queuosine biosynthetic process"/>
    <property type="evidence" value="ECO:0007669"/>
    <property type="project" value="UniProtKB-UniRule"/>
</dbReference>
<dbReference type="GO" id="GO:0002099">
    <property type="term" value="P:tRNA wobble guanine modification"/>
    <property type="evidence" value="ECO:0007669"/>
    <property type="project" value="TreeGrafter"/>
</dbReference>
<dbReference type="GO" id="GO:0101030">
    <property type="term" value="P:tRNA-guanine transglycosylation"/>
    <property type="evidence" value="ECO:0007669"/>
    <property type="project" value="InterPro"/>
</dbReference>
<dbReference type="FunFam" id="3.20.20.105:FF:000001">
    <property type="entry name" value="Queuine tRNA-ribosyltransferase"/>
    <property type="match status" value="1"/>
</dbReference>
<dbReference type="Gene3D" id="3.20.20.105">
    <property type="entry name" value="Queuine tRNA-ribosyltransferase-like"/>
    <property type="match status" value="1"/>
</dbReference>
<dbReference type="HAMAP" id="MF_00168">
    <property type="entry name" value="Q_tRNA_Tgt"/>
    <property type="match status" value="1"/>
</dbReference>
<dbReference type="InterPro" id="IPR050076">
    <property type="entry name" value="ArchSynthase1/Queuine_TRR"/>
</dbReference>
<dbReference type="InterPro" id="IPR004803">
    <property type="entry name" value="TGT"/>
</dbReference>
<dbReference type="InterPro" id="IPR036511">
    <property type="entry name" value="TGT-like_sf"/>
</dbReference>
<dbReference type="InterPro" id="IPR002616">
    <property type="entry name" value="tRNA_ribo_trans-like"/>
</dbReference>
<dbReference type="NCBIfam" id="TIGR00430">
    <property type="entry name" value="Q_tRNA_tgt"/>
    <property type="match status" value="1"/>
</dbReference>
<dbReference type="NCBIfam" id="TIGR00449">
    <property type="entry name" value="tgt_general"/>
    <property type="match status" value="1"/>
</dbReference>
<dbReference type="PANTHER" id="PTHR46499">
    <property type="entry name" value="QUEUINE TRNA-RIBOSYLTRANSFERASE"/>
    <property type="match status" value="1"/>
</dbReference>
<dbReference type="PANTHER" id="PTHR46499:SF1">
    <property type="entry name" value="QUEUINE TRNA-RIBOSYLTRANSFERASE"/>
    <property type="match status" value="1"/>
</dbReference>
<dbReference type="Pfam" id="PF01702">
    <property type="entry name" value="TGT"/>
    <property type="match status" value="1"/>
</dbReference>
<dbReference type="SUPFAM" id="SSF51713">
    <property type="entry name" value="tRNA-guanine transglycosylase"/>
    <property type="match status" value="1"/>
</dbReference>
<gene>
    <name evidence="1" type="primary">tgt</name>
    <name type="ordered locus">MGAS2096_Spy0186</name>
</gene>
<comment type="function">
    <text evidence="1">Catalyzes the base-exchange of a guanine (G) residue with the queuine precursor 7-aminomethyl-7-deazaguanine (PreQ1) at position 34 (anticodon wobble position) in tRNAs with GU(N) anticodons (tRNA-Asp, -Asn, -His and -Tyr). Catalysis occurs through a double-displacement mechanism. The nucleophile active site attacks the C1' of nucleotide 34 to detach the guanine base from the RNA, forming a covalent enzyme-RNA intermediate. The proton acceptor active site deprotonates the incoming PreQ1, allowing a nucleophilic attack on the C1' of the ribose to form the product. After dissociation, two additional enzymatic reactions on the tRNA convert PreQ1 to queuine (Q), resulting in the hypermodified nucleoside queuosine (7-(((4,5-cis-dihydroxy-2-cyclopenten-1-yl)amino)methyl)-7-deazaguanosine).</text>
</comment>
<comment type="catalytic activity">
    <reaction evidence="1">
        <text>7-aminomethyl-7-carbaguanine + guanosine(34) in tRNA = 7-aminomethyl-7-carbaguanosine(34) in tRNA + guanine</text>
        <dbReference type="Rhea" id="RHEA:24104"/>
        <dbReference type="Rhea" id="RHEA-COMP:10341"/>
        <dbReference type="Rhea" id="RHEA-COMP:10342"/>
        <dbReference type="ChEBI" id="CHEBI:16235"/>
        <dbReference type="ChEBI" id="CHEBI:58703"/>
        <dbReference type="ChEBI" id="CHEBI:74269"/>
        <dbReference type="ChEBI" id="CHEBI:82833"/>
        <dbReference type="EC" id="2.4.2.29"/>
    </reaction>
</comment>
<comment type="cofactor">
    <cofactor evidence="1">
        <name>Zn(2+)</name>
        <dbReference type="ChEBI" id="CHEBI:29105"/>
    </cofactor>
    <text evidence="1">Binds 1 zinc ion per subunit.</text>
</comment>
<comment type="pathway">
    <text evidence="1">tRNA modification; tRNA-queuosine biosynthesis.</text>
</comment>
<comment type="subunit">
    <text evidence="1">Homodimer. Within each dimer, one monomer is responsible for RNA recognition and catalysis, while the other monomer binds to the replacement base PreQ1.</text>
</comment>
<comment type="similarity">
    <text evidence="1">Belongs to the queuine tRNA-ribosyltransferase family.</text>
</comment>
<name>TGT_STRPB</name>
<protein>
    <recommendedName>
        <fullName evidence="1">Queuine tRNA-ribosyltransferase</fullName>
        <ecNumber evidence="1">2.4.2.29</ecNumber>
    </recommendedName>
    <alternativeName>
        <fullName evidence="1">Guanine insertion enzyme</fullName>
    </alternativeName>
    <alternativeName>
        <fullName evidence="1">tRNA-guanine transglycosylase</fullName>
    </alternativeName>
</protein>